<protein>
    <recommendedName>
        <fullName evidence="1">Trigger factor</fullName>
        <shortName evidence="1">TF</shortName>
        <ecNumber evidence="1">5.2.1.8</ecNumber>
    </recommendedName>
    <alternativeName>
        <fullName evidence="1">PPIase</fullName>
    </alternativeName>
</protein>
<feature type="chain" id="PRO_0000179419" description="Trigger factor">
    <location>
        <begin position="1"/>
        <end position="432"/>
    </location>
</feature>
<feature type="domain" description="PPIase FKBP-type" evidence="1">
    <location>
        <begin position="161"/>
        <end position="246"/>
    </location>
</feature>
<sequence>MQVSVETTQGLGRRVTITIAADSIETAVKSELVNVAKKVRIDGFRKGKVPMNIVAQRYGASVRQDVLGDLMSRNFVDAIIKEKINPAGAPNYVPGEYKVGEDFTYSVEFEVYPEVELTGLESIEVEKPVVEVTDADVDVMLDTLRKQQATWKEKDGAADAEDRVTIDFTGSVDGEEFEGGKATDFVLAMGQGRMIPGFEDGVKGHKAGEEFTIDVTFPEEYHAENLKGKAAKFVINLKKVEERELPELTEEFIKRFGVEDGSVAGLRAEVRKNMERELKGAVRNRVKSQAIEGLVKANDIDVPAALIDSEIDVLRRQAAQRFGGNEKQALELPRELFEEQAKRRVVVGLLLGEVIRTNELKADEERVKGLIEEMASAYEDPKEVIEFYSKNKELMDNMRNVALEEQAVEAVLAKAKVSEKATSFNELMNQQA</sequence>
<reference key="1">
    <citation type="journal article" date="2004" name="Nat. Genet.">
        <title>Comparison of genome degradation in Paratyphi A and Typhi, human-restricted serovars of Salmonella enterica that cause typhoid.</title>
        <authorList>
            <person name="McClelland M."/>
            <person name="Sanderson K.E."/>
            <person name="Clifton S.W."/>
            <person name="Latreille P."/>
            <person name="Porwollik S."/>
            <person name="Sabo A."/>
            <person name="Meyer R."/>
            <person name="Bieri T."/>
            <person name="Ozersky P."/>
            <person name="McLellan M."/>
            <person name="Harkins C.R."/>
            <person name="Wang C."/>
            <person name="Nguyen C."/>
            <person name="Berghoff A."/>
            <person name="Elliott G."/>
            <person name="Kohlberg S."/>
            <person name="Strong C."/>
            <person name="Du F."/>
            <person name="Carter J."/>
            <person name="Kremizki C."/>
            <person name="Layman D."/>
            <person name="Leonard S."/>
            <person name="Sun H."/>
            <person name="Fulton L."/>
            <person name="Nash W."/>
            <person name="Miner T."/>
            <person name="Minx P."/>
            <person name="Delehaunty K."/>
            <person name="Fronick C."/>
            <person name="Magrini V."/>
            <person name="Nhan M."/>
            <person name="Warren W."/>
            <person name="Florea L."/>
            <person name="Spieth J."/>
            <person name="Wilson R.K."/>
        </authorList>
    </citation>
    <scope>NUCLEOTIDE SEQUENCE [LARGE SCALE GENOMIC DNA]</scope>
    <source>
        <strain>ATCC 9150 / SARB42</strain>
    </source>
</reference>
<dbReference type="EC" id="5.2.1.8" evidence="1"/>
<dbReference type="EMBL" id="CP000026">
    <property type="protein sequence ID" value="AAV78160.1"/>
    <property type="molecule type" value="Genomic_DNA"/>
</dbReference>
<dbReference type="RefSeq" id="WP_001198403.1">
    <property type="nucleotide sequence ID" value="NC_006511.1"/>
</dbReference>
<dbReference type="SMR" id="Q5PFN3"/>
<dbReference type="KEGG" id="spt:SPA2275"/>
<dbReference type="HOGENOM" id="CLU_033058_2_0_6"/>
<dbReference type="Proteomes" id="UP000008185">
    <property type="component" value="Chromosome"/>
</dbReference>
<dbReference type="GO" id="GO:0005737">
    <property type="term" value="C:cytoplasm"/>
    <property type="evidence" value="ECO:0007669"/>
    <property type="project" value="UniProtKB-SubCell"/>
</dbReference>
<dbReference type="GO" id="GO:0003755">
    <property type="term" value="F:peptidyl-prolyl cis-trans isomerase activity"/>
    <property type="evidence" value="ECO:0007669"/>
    <property type="project" value="UniProtKB-UniRule"/>
</dbReference>
<dbReference type="GO" id="GO:0044183">
    <property type="term" value="F:protein folding chaperone"/>
    <property type="evidence" value="ECO:0007669"/>
    <property type="project" value="TreeGrafter"/>
</dbReference>
<dbReference type="GO" id="GO:0043022">
    <property type="term" value="F:ribosome binding"/>
    <property type="evidence" value="ECO:0007669"/>
    <property type="project" value="TreeGrafter"/>
</dbReference>
<dbReference type="GO" id="GO:0051083">
    <property type="term" value="P:'de novo' cotranslational protein folding"/>
    <property type="evidence" value="ECO:0007669"/>
    <property type="project" value="TreeGrafter"/>
</dbReference>
<dbReference type="GO" id="GO:0051301">
    <property type="term" value="P:cell division"/>
    <property type="evidence" value="ECO:0007669"/>
    <property type="project" value="UniProtKB-KW"/>
</dbReference>
<dbReference type="GO" id="GO:0061077">
    <property type="term" value="P:chaperone-mediated protein folding"/>
    <property type="evidence" value="ECO:0007669"/>
    <property type="project" value="TreeGrafter"/>
</dbReference>
<dbReference type="GO" id="GO:0015031">
    <property type="term" value="P:protein transport"/>
    <property type="evidence" value="ECO:0007669"/>
    <property type="project" value="UniProtKB-UniRule"/>
</dbReference>
<dbReference type="GO" id="GO:0043335">
    <property type="term" value="P:protein unfolding"/>
    <property type="evidence" value="ECO:0007669"/>
    <property type="project" value="TreeGrafter"/>
</dbReference>
<dbReference type="FunFam" id="1.10.3120.10:FF:000001">
    <property type="entry name" value="Trigger factor"/>
    <property type="match status" value="1"/>
</dbReference>
<dbReference type="FunFam" id="3.10.50.40:FF:000001">
    <property type="entry name" value="Trigger factor"/>
    <property type="match status" value="1"/>
</dbReference>
<dbReference type="FunFam" id="3.30.70.1050:FF:000001">
    <property type="entry name" value="Trigger factor"/>
    <property type="match status" value="1"/>
</dbReference>
<dbReference type="Gene3D" id="3.10.50.40">
    <property type="match status" value="1"/>
</dbReference>
<dbReference type="Gene3D" id="3.30.70.1050">
    <property type="entry name" value="Trigger factor ribosome-binding domain"/>
    <property type="match status" value="1"/>
</dbReference>
<dbReference type="Gene3D" id="1.10.3120.10">
    <property type="entry name" value="Trigger factor, C-terminal domain"/>
    <property type="match status" value="1"/>
</dbReference>
<dbReference type="HAMAP" id="MF_00303">
    <property type="entry name" value="Trigger_factor_Tig"/>
    <property type="match status" value="1"/>
</dbReference>
<dbReference type="InterPro" id="IPR046357">
    <property type="entry name" value="PPIase_dom_sf"/>
</dbReference>
<dbReference type="InterPro" id="IPR001179">
    <property type="entry name" value="PPIase_FKBP_dom"/>
</dbReference>
<dbReference type="InterPro" id="IPR005215">
    <property type="entry name" value="Trig_fac"/>
</dbReference>
<dbReference type="InterPro" id="IPR008880">
    <property type="entry name" value="Trigger_fac_C"/>
</dbReference>
<dbReference type="InterPro" id="IPR037041">
    <property type="entry name" value="Trigger_fac_C_sf"/>
</dbReference>
<dbReference type="InterPro" id="IPR008881">
    <property type="entry name" value="Trigger_fac_ribosome-bd_bac"/>
</dbReference>
<dbReference type="InterPro" id="IPR036611">
    <property type="entry name" value="Trigger_fac_ribosome-bd_sf"/>
</dbReference>
<dbReference type="InterPro" id="IPR027304">
    <property type="entry name" value="Trigger_fact/SurA_dom_sf"/>
</dbReference>
<dbReference type="NCBIfam" id="TIGR00115">
    <property type="entry name" value="tig"/>
    <property type="match status" value="1"/>
</dbReference>
<dbReference type="PANTHER" id="PTHR30560">
    <property type="entry name" value="TRIGGER FACTOR CHAPERONE AND PEPTIDYL-PROLYL CIS/TRANS ISOMERASE"/>
    <property type="match status" value="1"/>
</dbReference>
<dbReference type="PANTHER" id="PTHR30560:SF3">
    <property type="entry name" value="TRIGGER FACTOR-LIKE PROTEIN TIG, CHLOROPLASTIC"/>
    <property type="match status" value="1"/>
</dbReference>
<dbReference type="Pfam" id="PF00254">
    <property type="entry name" value="FKBP_C"/>
    <property type="match status" value="1"/>
</dbReference>
<dbReference type="Pfam" id="PF05698">
    <property type="entry name" value="Trigger_C"/>
    <property type="match status" value="1"/>
</dbReference>
<dbReference type="Pfam" id="PF05697">
    <property type="entry name" value="Trigger_N"/>
    <property type="match status" value="1"/>
</dbReference>
<dbReference type="PIRSF" id="PIRSF003095">
    <property type="entry name" value="Trigger_factor"/>
    <property type="match status" value="1"/>
</dbReference>
<dbReference type="SUPFAM" id="SSF54534">
    <property type="entry name" value="FKBP-like"/>
    <property type="match status" value="1"/>
</dbReference>
<dbReference type="SUPFAM" id="SSF109998">
    <property type="entry name" value="Triger factor/SurA peptide-binding domain-like"/>
    <property type="match status" value="1"/>
</dbReference>
<dbReference type="SUPFAM" id="SSF102735">
    <property type="entry name" value="Trigger factor ribosome-binding domain"/>
    <property type="match status" value="1"/>
</dbReference>
<dbReference type="PROSITE" id="PS50059">
    <property type="entry name" value="FKBP_PPIASE"/>
    <property type="match status" value="1"/>
</dbReference>
<gene>
    <name evidence="1" type="primary">tig</name>
    <name type="ordered locus">SPA2275</name>
</gene>
<evidence type="ECO:0000255" key="1">
    <source>
        <dbReference type="HAMAP-Rule" id="MF_00303"/>
    </source>
</evidence>
<organism>
    <name type="scientific">Salmonella paratyphi A (strain ATCC 9150 / SARB42)</name>
    <dbReference type="NCBI Taxonomy" id="295319"/>
    <lineage>
        <taxon>Bacteria</taxon>
        <taxon>Pseudomonadati</taxon>
        <taxon>Pseudomonadota</taxon>
        <taxon>Gammaproteobacteria</taxon>
        <taxon>Enterobacterales</taxon>
        <taxon>Enterobacteriaceae</taxon>
        <taxon>Salmonella</taxon>
    </lineage>
</organism>
<name>TIG_SALPA</name>
<proteinExistence type="inferred from homology"/>
<accession>Q5PFN3</accession>
<comment type="function">
    <text evidence="1">Involved in protein export. Acts as a chaperone by maintaining the newly synthesized protein in an open conformation. Functions as a peptidyl-prolyl cis-trans isomerase.</text>
</comment>
<comment type="catalytic activity">
    <reaction evidence="1">
        <text>[protein]-peptidylproline (omega=180) = [protein]-peptidylproline (omega=0)</text>
        <dbReference type="Rhea" id="RHEA:16237"/>
        <dbReference type="Rhea" id="RHEA-COMP:10747"/>
        <dbReference type="Rhea" id="RHEA-COMP:10748"/>
        <dbReference type="ChEBI" id="CHEBI:83833"/>
        <dbReference type="ChEBI" id="CHEBI:83834"/>
        <dbReference type="EC" id="5.2.1.8"/>
    </reaction>
</comment>
<comment type="subcellular location">
    <subcellularLocation>
        <location>Cytoplasm</location>
    </subcellularLocation>
    <text evidence="1">About half TF is bound to the ribosome near the polypeptide exit tunnel while the other half is free in the cytoplasm.</text>
</comment>
<comment type="domain">
    <text evidence="1">Consists of 3 domains; the N-terminus binds the ribosome, the middle domain has PPIase activity, while the C-terminus has intrinsic chaperone activity on its own.</text>
</comment>
<comment type="similarity">
    <text evidence="1">Belongs to the FKBP-type PPIase family. Tig subfamily.</text>
</comment>
<keyword id="KW-0131">Cell cycle</keyword>
<keyword id="KW-0132">Cell division</keyword>
<keyword id="KW-0143">Chaperone</keyword>
<keyword id="KW-0963">Cytoplasm</keyword>
<keyword id="KW-0413">Isomerase</keyword>
<keyword id="KW-0697">Rotamase</keyword>